<proteinExistence type="inferred from homology"/>
<comment type="catalytic activity">
    <reaction evidence="1">
        <text>(S)-malate + NAD(+) = pyruvate + CO2 + NADH</text>
        <dbReference type="Rhea" id="RHEA:12653"/>
        <dbReference type="ChEBI" id="CHEBI:15361"/>
        <dbReference type="ChEBI" id="CHEBI:15589"/>
        <dbReference type="ChEBI" id="CHEBI:16526"/>
        <dbReference type="ChEBI" id="CHEBI:57540"/>
        <dbReference type="ChEBI" id="CHEBI:57945"/>
        <dbReference type="EC" id="1.1.1.38"/>
    </reaction>
</comment>
<comment type="catalytic activity">
    <reaction evidence="1">
        <text>oxaloacetate + H(+) = pyruvate + CO2</text>
        <dbReference type="Rhea" id="RHEA:15641"/>
        <dbReference type="ChEBI" id="CHEBI:15361"/>
        <dbReference type="ChEBI" id="CHEBI:15378"/>
        <dbReference type="ChEBI" id="CHEBI:16452"/>
        <dbReference type="ChEBI" id="CHEBI:16526"/>
        <dbReference type="EC" id="1.1.1.38"/>
    </reaction>
</comment>
<comment type="cofactor">
    <cofactor evidence="1">
        <name>Mg(2+)</name>
        <dbReference type="ChEBI" id="CHEBI:18420"/>
    </cofactor>
    <cofactor evidence="1">
        <name>Mn(2+)</name>
        <dbReference type="ChEBI" id="CHEBI:29035"/>
    </cofactor>
    <text evidence="1">Divalent metal cations. Prefers magnesium or manganese.</text>
</comment>
<comment type="subunit">
    <text evidence="1">Homotetramer.</text>
</comment>
<comment type="similarity">
    <text evidence="1">Belongs to the malic enzymes family.</text>
</comment>
<evidence type="ECO:0000255" key="1">
    <source>
        <dbReference type="HAMAP-Rule" id="MF_01619"/>
    </source>
</evidence>
<organism>
    <name type="scientific">Shewanella sediminis (strain HAW-EB3)</name>
    <dbReference type="NCBI Taxonomy" id="425104"/>
    <lineage>
        <taxon>Bacteria</taxon>
        <taxon>Pseudomonadati</taxon>
        <taxon>Pseudomonadota</taxon>
        <taxon>Gammaproteobacteria</taxon>
        <taxon>Alteromonadales</taxon>
        <taxon>Shewanellaceae</taxon>
        <taxon>Shewanella</taxon>
    </lineage>
</organism>
<protein>
    <recommendedName>
        <fullName evidence="1">NAD-dependent malic enzyme</fullName>
        <shortName evidence="1">NAD-ME</shortName>
        <ecNumber evidence="1">1.1.1.38</ecNumber>
    </recommendedName>
</protein>
<reference key="1">
    <citation type="submission" date="2007-08" db="EMBL/GenBank/DDBJ databases">
        <title>Complete sequence of Shewanella sediminis HAW-EB3.</title>
        <authorList>
            <consortium name="US DOE Joint Genome Institute"/>
            <person name="Copeland A."/>
            <person name="Lucas S."/>
            <person name="Lapidus A."/>
            <person name="Barry K."/>
            <person name="Glavina del Rio T."/>
            <person name="Dalin E."/>
            <person name="Tice H."/>
            <person name="Pitluck S."/>
            <person name="Chertkov O."/>
            <person name="Brettin T."/>
            <person name="Bruce D."/>
            <person name="Detter J.C."/>
            <person name="Han C."/>
            <person name="Schmutz J."/>
            <person name="Larimer F."/>
            <person name="Land M."/>
            <person name="Hauser L."/>
            <person name="Kyrpides N."/>
            <person name="Kim E."/>
            <person name="Zhao J.-S."/>
            <person name="Richardson P."/>
        </authorList>
    </citation>
    <scope>NUCLEOTIDE SEQUENCE [LARGE SCALE GENOMIC DNA]</scope>
    <source>
        <strain>HAW-EB3</strain>
    </source>
</reference>
<sequence length="562" mass="62472">MDDHKRPLYLPFAGPAILEAPLINKGSAFTDEERVFFNLEGLLPHVIETIEEQASRAYDQYTNFTNDLDKHIYLRNIQDTNETLYYRLVQNHITEMMPIIYTPTVGMACERFSKNYRRNRGLFISYPNKDRIDDLLNNSTRQKVKIIVVTDGERILGLGDQGIGGMGIPIGKLSLYTSCGGISPAYTLPITLDVGTDNPNLLEDPMYMGWRHQRIGGEEYTEFVEAFMQAVHRRWPDALIQFEDFAQKNAMPLLERYKDQYCCFNDDVQGTAAVTVGSLLAACKAAKTKLSEQRVTFLGAGSAGCGIAEAIVAQMIAEGLSEEQARAQVFMVDRWGLLQDNMPTLLPFQQKLAQKCDDIEGWDNFSENISLLDVVNNAKPTVLIGVSGAPGVFSEEIIKAMHSHCPRPIVFPLSNPTSRVEATPKDLLHWTKGQALVATGSPFEPVVVEDETFEIAQCNNSYIFPGIGLGVLAAGAKRVSNEMLMASSRALAECSPLALDGEGPLLPPLEEIHKVSKHIALAVGKVAIEQGHALPCTDELLEQSIEDNFWTAEYRRYKRTSF</sequence>
<gene>
    <name evidence="1" type="primary">maeA</name>
    <name type="ordered locus">Ssed_3518</name>
</gene>
<dbReference type="EC" id="1.1.1.38" evidence="1"/>
<dbReference type="EMBL" id="CP000821">
    <property type="protein sequence ID" value="ABV38122.1"/>
    <property type="molecule type" value="Genomic_DNA"/>
</dbReference>
<dbReference type="RefSeq" id="WP_012143852.1">
    <property type="nucleotide sequence ID" value="NC_009831.1"/>
</dbReference>
<dbReference type="SMR" id="A8FZ49"/>
<dbReference type="STRING" id="425104.Ssed_3518"/>
<dbReference type="KEGG" id="sse:Ssed_3518"/>
<dbReference type="eggNOG" id="COG0281">
    <property type="taxonomic scope" value="Bacteria"/>
</dbReference>
<dbReference type="HOGENOM" id="CLU_011405_5_2_6"/>
<dbReference type="OrthoDB" id="3314528at2"/>
<dbReference type="Proteomes" id="UP000002015">
    <property type="component" value="Chromosome"/>
</dbReference>
<dbReference type="GO" id="GO:0005829">
    <property type="term" value="C:cytosol"/>
    <property type="evidence" value="ECO:0007669"/>
    <property type="project" value="TreeGrafter"/>
</dbReference>
<dbReference type="GO" id="GO:0004471">
    <property type="term" value="F:malate dehydrogenase (decarboxylating) (NAD+) activity"/>
    <property type="evidence" value="ECO:0007669"/>
    <property type="project" value="UniProtKB-UniRule"/>
</dbReference>
<dbReference type="GO" id="GO:0046872">
    <property type="term" value="F:metal ion binding"/>
    <property type="evidence" value="ECO:0007669"/>
    <property type="project" value="UniProtKB-KW"/>
</dbReference>
<dbReference type="GO" id="GO:0051287">
    <property type="term" value="F:NAD binding"/>
    <property type="evidence" value="ECO:0007669"/>
    <property type="project" value="InterPro"/>
</dbReference>
<dbReference type="GO" id="GO:0008948">
    <property type="term" value="F:oxaloacetate decarboxylase activity"/>
    <property type="evidence" value="ECO:0007669"/>
    <property type="project" value="UniProtKB-UniRule"/>
</dbReference>
<dbReference type="GO" id="GO:0006108">
    <property type="term" value="P:malate metabolic process"/>
    <property type="evidence" value="ECO:0007669"/>
    <property type="project" value="TreeGrafter"/>
</dbReference>
<dbReference type="CDD" id="cd05312">
    <property type="entry name" value="NAD_bind_1_malic_enz"/>
    <property type="match status" value="1"/>
</dbReference>
<dbReference type="FunFam" id="3.40.50.10380:FF:000001">
    <property type="entry name" value="NAD-dependent malic enzyme"/>
    <property type="match status" value="1"/>
</dbReference>
<dbReference type="FunFam" id="3.40.50.720:FF:000055">
    <property type="entry name" value="NAD-dependent malic enzyme"/>
    <property type="match status" value="1"/>
</dbReference>
<dbReference type="Gene3D" id="3.40.50.10380">
    <property type="entry name" value="Malic enzyme, N-terminal domain"/>
    <property type="match status" value="1"/>
</dbReference>
<dbReference type="Gene3D" id="3.40.50.720">
    <property type="entry name" value="NAD(P)-binding Rossmann-like Domain"/>
    <property type="match status" value="1"/>
</dbReference>
<dbReference type="HAMAP" id="MF_01619">
    <property type="entry name" value="NAD_malic_enz"/>
    <property type="match status" value="1"/>
</dbReference>
<dbReference type="InterPro" id="IPR046346">
    <property type="entry name" value="Aminoacid_DH-like_N_sf"/>
</dbReference>
<dbReference type="InterPro" id="IPR015884">
    <property type="entry name" value="Malic_enzyme_CS"/>
</dbReference>
<dbReference type="InterPro" id="IPR012301">
    <property type="entry name" value="Malic_N_dom"/>
</dbReference>
<dbReference type="InterPro" id="IPR037062">
    <property type="entry name" value="Malic_N_dom_sf"/>
</dbReference>
<dbReference type="InterPro" id="IPR012302">
    <property type="entry name" value="Malic_NAD-bd"/>
</dbReference>
<dbReference type="InterPro" id="IPR001891">
    <property type="entry name" value="Malic_OxRdtase"/>
</dbReference>
<dbReference type="InterPro" id="IPR036291">
    <property type="entry name" value="NAD(P)-bd_dom_sf"/>
</dbReference>
<dbReference type="InterPro" id="IPR023667">
    <property type="entry name" value="NAD_malic_enz_proteobac"/>
</dbReference>
<dbReference type="NCBIfam" id="NF010052">
    <property type="entry name" value="PRK13529.1"/>
    <property type="match status" value="1"/>
</dbReference>
<dbReference type="PANTHER" id="PTHR23406">
    <property type="entry name" value="MALIC ENZYME-RELATED"/>
    <property type="match status" value="1"/>
</dbReference>
<dbReference type="PANTHER" id="PTHR23406:SF34">
    <property type="entry name" value="NAD-DEPENDENT MALIC ENZYME, MITOCHONDRIAL"/>
    <property type="match status" value="1"/>
</dbReference>
<dbReference type="Pfam" id="PF00390">
    <property type="entry name" value="malic"/>
    <property type="match status" value="1"/>
</dbReference>
<dbReference type="Pfam" id="PF03949">
    <property type="entry name" value="Malic_M"/>
    <property type="match status" value="1"/>
</dbReference>
<dbReference type="PIRSF" id="PIRSF000106">
    <property type="entry name" value="ME"/>
    <property type="match status" value="1"/>
</dbReference>
<dbReference type="PRINTS" id="PR00072">
    <property type="entry name" value="MALOXRDTASE"/>
</dbReference>
<dbReference type="SMART" id="SM01274">
    <property type="entry name" value="malic"/>
    <property type="match status" value="1"/>
</dbReference>
<dbReference type="SMART" id="SM00919">
    <property type="entry name" value="Malic_M"/>
    <property type="match status" value="1"/>
</dbReference>
<dbReference type="SUPFAM" id="SSF53223">
    <property type="entry name" value="Aminoacid dehydrogenase-like, N-terminal domain"/>
    <property type="match status" value="1"/>
</dbReference>
<dbReference type="SUPFAM" id="SSF51735">
    <property type="entry name" value="NAD(P)-binding Rossmann-fold domains"/>
    <property type="match status" value="1"/>
</dbReference>
<dbReference type="PROSITE" id="PS00331">
    <property type="entry name" value="MALIC_ENZYMES"/>
    <property type="match status" value="1"/>
</dbReference>
<name>MAO1_SHESH</name>
<keyword id="KW-0479">Metal-binding</keyword>
<keyword id="KW-0520">NAD</keyword>
<keyword id="KW-0560">Oxidoreductase</keyword>
<keyword id="KW-1185">Reference proteome</keyword>
<feature type="chain" id="PRO_1000088077" description="NAD-dependent malic enzyme">
    <location>
        <begin position="1"/>
        <end position="562"/>
    </location>
</feature>
<feature type="active site" description="Proton donor" evidence="1">
    <location>
        <position position="101"/>
    </location>
</feature>
<feature type="active site" description="Proton acceptor" evidence="1">
    <location>
        <position position="172"/>
    </location>
</feature>
<feature type="binding site" evidence="1">
    <location>
        <position position="154"/>
    </location>
    <ligand>
        <name>NAD(+)</name>
        <dbReference type="ChEBI" id="CHEBI:57540"/>
    </ligand>
</feature>
<feature type="binding site" evidence="1">
    <location>
        <position position="243"/>
    </location>
    <ligand>
        <name>a divalent metal cation</name>
        <dbReference type="ChEBI" id="CHEBI:60240"/>
    </ligand>
</feature>
<feature type="binding site" evidence="1">
    <location>
        <position position="244"/>
    </location>
    <ligand>
        <name>a divalent metal cation</name>
        <dbReference type="ChEBI" id="CHEBI:60240"/>
    </ligand>
</feature>
<feature type="binding site" evidence="1">
    <location>
        <position position="267"/>
    </location>
    <ligand>
        <name>a divalent metal cation</name>
        <dbReference type="ChEBI" id="CHEBI:60240"/>
    </ligand>
</feature>
<feature type="binding site" evidence="1">
    <location>
        <position position="267"/>
    </location>
    <ligand>
        <name>NAD(+)</name>
        <dbReference type="ChEBI" id="CHEBI:57540"/>
    </ligand>
</feature>
<feature type="binding site" evidence="1">
    <location>
        <position position="415"/>
    </location>
    <ligand>
        <name>NAD(+)</name>
        <dbReference type="ChEBI" id="CHEBI:57540"/>
    </ligand>
</feature>
<feature type="site" description="Important for activity" evidence="1">
    <location>
        <position position="267"/>
    </location>
</feature>
<accession>A8FZ49</accession>